<dbReference type="EC" id="3.5.4.16" evidence="2"/>
<dbReference type="EMBL" id="CR954246">
    <property type="protein sequence ID" value="CAI85182.1"/>
    <property type="molecule type" value="Genomic_DNA"/>
</dbReference>
<dbReference type="SMR" id="Q3IF89"/>
<dbReference type="STRING" id="326442.PSHAa0073"/>
<dbReference type="KEGG" id="pha:PSHAa0073"/>
<dbReference type="PATRIC" id="fig|326442.8.peg.72"/>
<dbReference type="eggNOG" id="COG0302">
    <property type="taxonomic scope" value="Bacteria"/>
</dbReference>
<dbReference type="HOGENOM" id="CLU_049768_3_1_6"/>
<dbReference type="BioCyc" id="PHAL326442:PSHA_RS00375-MONOMER"/>
<dbReference type="UniPathway" id="UPA00848">
    <property type="reaction ID" value="UER00151"/>
</dbReference>
<dbReference type="Proteomes" id="UP000006843">
    <property type="component" value="Chromosome I"/>
</dbReference>
<dbReference type="GO" id="GO:0005737">
    <property type="term" value="C:cytoplasm"/>
    <property type="evidence" value="ECO:0007669"/>
    <property type="project" value="TreeGrafter"/>
</dbReference>
<dbReference type="GO" id="GO:0005525">
    <property type="term" value="F:GTP binding"/>
    <property type="evidence" value="ECO:0007669"/>
    <property type="project" value="UniProtKB-KW"/>
</dbReference>
<dbReference type="GO" id="GO:0003934">
    <property type="term" value="F:GTP cyclohydrolase I activity"/>
    <property type="evidence" value="ECO:0007669"/>
    <property type="project" value="UniProtKB-UniRule"/>
</dbReference>
<dbReference type="GO" id="GO:0008270">
    <property type="term" value="F:zinc ion binding"/>
    <property type="evidence" value="ECO:0007669"/>
    <property type="project" value="UniProtKB-UniRule"/>
</dbReference>
<dbReference type="GO" id="GO:0006730">
    <property type="term" value="P:one-carbon metabolic process"/>
    <property type="evidence" value="ECO:0007669"/>
    <property type="project" value="UniProtKB-UniRule"/>
</dbReference>
<dbReference type="GO" id="GO:0006729">
    <property type="term" value="P:tetrahydrobiopterin biosynthetic process"/>
    <property type="evidence" value="ECO:0007669"/>
    <property type="project" value="TreeGrafter"/>
</dbReference>
<dbReference type="GO" id="GO:0046654">
    <property type="term" value="P:tetrahydrofolate biosynthetic process"/>
    <property type="evidence" value="ECO:0007669"/>
    <property type="project" value="UniProtKB-UniRule"/>
</dbReference>
<dbReference type="FunFam" id="3.30.1130.10:FF:000001">
    <property type="entry name" value="GTP cyclohydrolase 1"/>
    <property type="match status" value="1"/>
</dbReference>
<dbReference type="Gene3D" id="1.10.286.10">
    <property type="match status" value="1"/>
</dbReference>
<dbReference type="Gene3D" id="3.30.1130.10">
    <property type="match status" value="1"/>
</dbReference>
<dbReference type="HAMAP" id="MF_00223">
    <property type="entry name" value="FolE"/>
    <property type="match status" value="1"/>
</dbReference>
<dbReference type="InterPro" id="IPR043133">
    <property type="entry name" value="GTP-CH-I_C/QueF"/>
</dbReference>
<dbReference type="InterPro" id="IPR043134">
    <property type="entry name" value="GTP-CH-I_N"/>
</dbReference>
<dbReference type="InterPro" id="IPR001474">
    <property type="entry name" value="GTP_CycHdrlase_I"/>
</dbReference>
<dbReference type="InterPro" id="IPR018234">
    <property type="entry name" value="GTP_CycHdrlase_I_CS"/>
</dbReference>
<dbReference type="InterPro" id="IPR020602">
    <property type="entry name" value="GTP_CycHdrlase_I_dom"/>
</dbReference>
<dbReference type="NCBIfam" id="TIGR00063">
    <property type="entry name" value="folE"/>
    <property type="match status" value="1"/>
</dbReference>
<dbReference type="NCBIfam" id="NF006825">
    <property type="entry name" value="PRK09347.1-2"/>
    <property type="match status" value="1"/>
</dbReference>
<dbReference type="NCBIfam" id="NF006826">
    <property type="entry name" value="PRK09347.1-3"/>
    <property type="match status" value="1"/>
</dbReference>
<dbReference type="PANTHER" id="PTHR11109:SF7">
    <property type="entry name" value="GTP CYCLOHYDROLASE 1"/>
    <property type="match status" value="1"/>
</dbReference>
<dbReference type="PANTHER" id="PTHR11109">
    <property type="entry name" value="GTP CYCLOHYDROLASE I"/>
    <property type="match status" value="1"/>
</dbReference>
<dbReference type="Pfam" id="PF01227">
    <property type="entry name" value="GTP_cyclohydroI"/>
    <property type="match status" value="1"/>
</dbReference>
<dbReference type="SUPFAM" id="SSF55620">
    <property type="entry name" value="Tetrahydrobiopterin biosynthesis enzymes-like"/>
    <property type="match status" value="1"/>
</dbReference>
<dbReference type="PROSITE" id="PS00859">
    <property type="entry name" value="GTP_CYCLOHYDROL_1_1"/>
    <property type="match status" value="1"/>
</dbReference>
<reference key="1">
    <citation type="journal article" date="2005" name="Genome Res.">
        <title>Coping with cold: the genome of the versatile marine Antarctica bacterium Pseudoalteromonas haloplanktis TAC125.</title>
        <authorList>
            <person name="Medigue C."/>
            <person name="Krin E."/>
            <person name="Pascal G."/>
            <person name="Barbe V."/>
            <person name="Bernsel A."/>
            <person name="Bertin P.N."/>
            <person name="Cheung F."/>
            <person name="Cruveiller S."/>
            <person name="D'Amico S."/>
            <person name="Duilio A."/>
            <person name="Fang G."/>
            <person name="Feller G."/>
            <person name="Ho C."/>
            <person name="Mangenot S."/>
            <person name="Marino G."/>
            <person name="Nilsson J."/>
            <person name="Parrilli E."/>
            <person name="Rocha E.P.C."/>
            <person name="Rouy Z."/>
            <person name="Sekowska A."/>
            <person name="Tutino M.L."/>
            <person name="Vallenet D."/>
            <person name="von Heijne G."/>
            <person name="Danchin A."/>
        </authorList>
    </citation>
    <scope>NUCLEOTIDE SEQUENCE [LARGE SCALE GENOMIC DNA]</scope>
    <source>
        <strain>TAC 125</strain>
    </source>
</reference>
<feature type="chain" id="PRO_1000043718" description="GTP cyclohydrolase 1">
    <location>
        <begin position="1"/>
        <end position="184"/>
    </location>
</feature>
<feature type="binding site" evidence="2">
    <location>
        <position position="75"/>
    </location>
    <ligand>
        <name>Zn(2+)</name>
        <dbReference type="ChEBI" id="CHEBI:29105"/>
    </ligand>
</feature>
<feature type="binding site" evidence="2">
    <location>
        <position position="78"/>
    </location>
    <ligand>
        <name>Zn(2+)</name>
        <dbReference type="ChEBI" id="CHEBI:29105"/>
    </ligand>
</feature>
<feature type="binding site" evidence="2">
    <location>
        <position position="146"/>
    </location>
    <ligand>
        <name>Zn(2+)</name>
        <dbReference type="ChEBI" id="CHEBI:29105"/>
    </ligand>
</feature>
<gene>
    <name evidence="2" type="primary">folE</name>
    <name type="ordered locus">PSHAa0073</name>
</gene>
<comment type="catalytic activity">
    <reaction evidence="2">
        <text>GTP + H2O = 7,8-dihydroneopterin 3'-triphosphate + formate + H(+)</text>
        <dbReference type="Rhea" id="RHEA:17473"/>
        <dbReference type="ChEBI" id="CHEBI:15377"/>
        <dbReference type="ChEBI" id="CHEBI:15378"/>
        <dbReference type="ChEBI" id="CHEBI:15740"/>
        <dbReference type="ChEBI" id="CHEBI:37565"/>
        <dbReference type="ChEBI" id="CHEBI:58462"/>
        <dbReference type="EC" id="3.5.4.16"/>
    </reaction>
</comment>
<comment type="pathway">
    <text evidence="2">Cofactor biosynthesis; 7,8-dihydroneopterin triphosphate biosynthesis; 7,8-dihydroneopterin triphosphate from GTP: step 1/1.</text>
</comment>
<comment type="subunit">
    <text evidence="1">Toroid-shaped homodecamer, composed of two pentamers of five dimers.</text>
</comment>
<comment type="similarity">
    <text evidence="2">Belongs to the GTP cyclohydrolase I family.</text>
</comment>
<sequence>MHNELKQGYENIITAVGEDPNREGLLDTPKRAAKAMEYLTQGYRQTLEEITNNAVFTSDADDMVLVQDIELYSMCEHHLLPFTGRCHIAYIPNGKVLGLSKFARIVDMFARRFQIQEQLTHQIAKAVEEVTGATGVGVIVEAKHMCMMMRGVEKQNSSMRTSVMLGNFRADPKTRNEFLQLIKG</sequence>
<accession>Q3IF89</accession>
<proteinExistence type="inferred from homology"/>
<name>GCH1_PSET1</name>
<keyword id="KW-0342">GTP-binding</keyword>
<keyword id="KW-0378">Hydrolase</keyword>
<keyword id="KW-0479">Metal-binding</keyword>
<keyword id="KW-0547">Nucleotide-binding</keyword>
<keyword id="KW-0554">One-carbon metabolism</keyword>
<keyword id="KW-1185">Reference proteome</keyword>
<keyword id="KW-0862">Zinc</keyword>
<organism>
    <name type="scientific">Pseudoalteromonas translucida (strain TAC 125)</name>
    <dbReference type="NCBI Taxonomy" id="326442"/>
    <lineage>
        <taxon>Bacteria</taxon>
        <taxon>Pseudomonadati</taxon>
        <taxon>Pseudomonadota</taxon>
        <taxon>Gammaproteobacteria</taxon>
        <taxon>Alteromonadales</taxon>
        <taxon>Pseudoalteromonadaceae</taxon>
        <taxon>Pseudoalteromonas</taxon>
    </lineage>
</organism>
<protein>
    <recommendedName>
        <fullName evidence="2">GTP cyclohydrolase 1</fullName>
        <ecNumber evidence="2">3.5.4.16</ecNumber>
    </recommendedName>
    <alternativeName>
        <fullName evidence="2">GTP cyclohydrolase I</fullName>
        <shortName evidence="2">GTP-CH-I</shortName>
    </alternativeName>
</protein>
<evidence type="ECO:0000250" key="1"/>
<evidence type="ECO:0000255" key="2">
    <source>
        <dbReference type="HAMAP-Rule" id="MF_00223"/>
    </source>
</evidence>